<comment type="function">
    <text evidence="1">Catalyzes the NADPH-dependent reduction of glutamyl-tRNA(Glu) to glutamate 1-semialdehyde (GSA).</text>
</comment>
<comment type="catalytic activity">
    <reaction evidence="1">
        <text>(S)-4-amino-5-oxopentanoate + tRNA(Glu) + NADP(+) = L-glutamyl-tRNA(Glu) + NADPH + H(+)</text>
        <dbReference type="Rhea" id="RHEA:12344"/>
        <dbReference type="Rhea" id="RHEA-COMP:9663"/>
        <dbReference type="Rhea" id="RHEA-COMP:9680"/>
        <dbReference type="ChEBI" id="CHEBI:15378"/>
        <dbReference type="ChEBI" id="CHEBI:57501"/>
        <dbReference type="ChEBI" id="CHEBI:57783"/>
        <dbReference type="ChEBI" id="CHEBI:58349"/>
        <dbReference type="ChEBI" id="CHEBI:78442"/>
        <dbReference type="ChEBI" id="CHEBI:78520"/>
        <dbReference type="EC" id="1.2.1.70"/>
    </reaction>
</comment>
<comment type="pathway">
    <text evidence="1">Porphyrin-containing compound metabolism; protoporphyrin-IX biosynthesis; 5-aminolevulinate from L-glutamyl-tRNA(Glu): step 1/2.</text>
</comment>
<comment type="subunit">
    <text evidence="1">Homodimer.</text>
</comment>
<comment type="domain">
    <text evidence="1">Possesses an unusual extended V-shaped dimeric structure with each monomer consisting of three distinct domains arranged along a curved 'spinal' alpha-helix. The N-terminal catalytic domain specifically recognizes the glutamate moiety of the substrate. The second domain is the NADPH-binding domain, and the third C-terminal domain is responsible for dimerization.</text>
</comment>
<comment type="miscellaneous">
    <text evidence="1">During catalysis, the active site Cys acts as a nucleophile attacking the alpha-carbonyl group of tRNA-bound glutamate with the formation of a thioester intermediate between enzyme and glutamate, and the concomitant release of tRNA(Glu). The thioester intermediate is finally reduced by direct hydride transfer from NADPH, to form the product GSA.</text>
</comment>
<comment type="similarity">
    <text evidence="1">Belongs to the glutamyl-tRNA reductase family.</text>
</comment>
<keyword id="KW-0521">NADP</keyword>
<keyword id="KW-0560">Oxidoreductase</keyword>
<keyword id="KW-0627">Porphyrin biosynthesis</keyword>
<sequence>MVIFSTGFNYKTAPVEIREKLAITENNYGLILEKLNSIEDIYEICVISTCNRVELYGVSNDNIEKVKEEILRILSQYSTVPVNTLKDYLFFYTNKEAIRHIFRVSSSLDSMVIGEPQIVCQFKDSFTKAKEYKAVRHILTRLFDKALNVSKKIRTSTGISRRAVSISYAAVLLAKKIFGDLKDKNVLIIGAGEMAELAAKHLHSLNVKHIFVSNRTFEKAVELADKFSGSAIRFEKIQEFLPEADIIIVSTGAKEPILKKEDVKRAIKSRKDPLFIIDISVPRNVEESVNELEGVYLYNIDDLKQVVNSNLEERKIEAQRAEFIIDEEVEKFVKWLNALKVSPIISSVRDYADKLRQQQLEKLFKQMPYLNEKERETIDLAMRSLINKLLHRPTMYIKDKAAKEGNTEVVKIFEDMFSSKWDFRKKGKNLEEIEDIVREEQ</sequence>
<gene>
    <name evidence="1" type="primary">hemA</name>
    <name type="ordered locus">SYO3AOP1_0208</name>
</gene>
<proteinExistence type="inferred from homology"/>
<name>HEM1_SULSY</name>
<accession>B2V771</accession>
<reference key="1">
    <citation type="journal article" date="2009" name="J. Bacteriol.">
        <title>Complete and draft genome sequences of six members of the Aquificales.</title>
        <authorList>
            <person name="Reysenbach A.-L."/>
            <person name="Hamamura N."/>
            <person name="Podar M."/>
            <person name="Griffiths E."/>
            <person name="Ferreira S."/>
            <person name="Hochstein R."/>
            <person name="Heidelberg J."/>
            <person name="Johnson J."/>
            <person name="Mead D."/>
            <person name="Pohorille A."/>
            <person name="Sarmiento M."/>
            <person name="Schweighofer K."/>
            <person name="Seshadri R."/>
            <person name="Voytek M.A."/>
        </authorList>
    </citation>
    <scope>NUCLEOTIDE SEQUENCE [LARGE SCALE GENOMIC DNA]</scope>
    <source>
        <strain>YO3AOP1</strain>
    </source>
</reference>
<dbReference type="EC" id="1.2.1.70" evidence="1"/>
<dbReference type="EMBL" id="CP001080">
    <property type="protein sequence ID" value="ACD65853.1"/>
    <property type="molecule type" value="Genomic_DNA"/>
</dbReference>
<dbReference type="RefSeq" id="WP_012458943.1">
    <property type="nucleotide sequence ID" value="NC_010730.1"/>
</dbReference>
<dbReference type="SMR" id="B2V771"/>
<dbReference type="STRING" id="436114.SYO3AOP1_0208"/>
<dbReference type="KEGG" id="sul:SYO3AOP1_0208"/>
<dbReference type="eggNOG" id="COG0373">
    <property type="taxonomic scope" value="Bacteria"/>
</dbReference>
<dbReference type="HOGENOM" id="CLU_035113_2_2_0"/>
<dbReference type="UniPathway" id="UPA00251">
    <property type="reaction ID" value="UER00316"/>
</dbReference>
<dbReference type="GO" id="GO:0008883">
    <property type="term" value="F:glutamyl-tRNA reductase activity"/>
    <property type="evidence" value="ECO:0007669"/>
    <property type="project" value="UniProtKB-UniRule"/>
</dbReference>
<dbReference type="GO" id="GO:0050661">
    <property type="term" value="F:NADP binding"/>
    <property type="evidence" value="ECO:0007669"/>
    <property type="project" value="InterPro"/>
</dbReference>
<dbReference type="GO" id="GO:0019353">
    <property type="term" value="P:protoporphyrinogen IX biosynthetic process from glutamate"/>
    <property type="evidence" value="ECO:0007669"/>
    <property type="project" value="TreeGrafter"/>
</dbReference>
<dbReference type="CDD" id="cd05213">
    <property type="entry name" value="NAD_bind_Glutamyl_tRNA_reduct"/>
    <property type="match status" value="1"/>
</dbReference>
<dbReference type="FunFam" id="3.30.460.30:FF:000001">
    <property type="entry name" value="Glutamyl-tRNA reductase"/>
    <property type="match status" value="1"/>
</dbReference>
<dbReference type="FunFam" id="3.40.50.720:FF:000031">
    <property type="entry name" value="Glutamyl-tRNA reductase"/>
    <property type="match status" value="1"/>
</dbReference>
<dbReference type="Gene3D" id="3.30.460.30">
    <property type="entry name" value="Glutamyl-tRNA reductase, N-terminal domain"/>
    <property type="match status" value="1"/>
</dbReference>
<dbReference type="Gene3D" id="3.40.50.720">
    <property type="entry name" value="NAD(P)-binding Rossmann-like Domain"/>
    <property type="match status" value="1"/>
</dbReference>
<dbReference type="HAMAP" id="MF_00087">
    <property type="entry name" value="Glu_tRNA_reductase"/>
    <property type="match status" value="1"/>
</dbReference>
<dbReference type="InterPro" id="IPR000343">
    <property type="entry name" value="4pyrrol_synth_GluRdtase"/>
</dbReference>
<dbReference type="InterPro" id="IPR015896">
    <property type="entry name" value="4pyrrol_synth_GluRdtase_dimer"/>
</dbReference>
<dbReference type="InterPro" id="IPR015895">
    <property type="entry name" value="4pyrrol_synth_GluRdtase_N"/>
</dbReference>
<dbReference type="InterPro" id="IPR036453">
    <property type="entry name" value="GluRdtase_dimer_dom_sf"/>
</dbReference>
<dbReference type="InterPro" id="IPR036343">
    <property type="entry name" value="GluRdtase_N_sf"/>
</dbReference>
<dbReference type="InterPro" id="IPR036291">
    <property type="entry name" value="NAD(P)-bd_dom_sf"/>
</dbReference>
<dbReference type="InterPro" id="IPR006151">
    <property type="entry name" value="Shikm_DH/Glu-tRNA_Rdtase"/>
</dbReference>
<dbReference type="NCBIfam" id="TIGR01035">
    <property type="entry name" value="hemA"/>
    <property type="match status" value="1"/>
</dbReference>
<dbReference type="PANTHER" id="PTHR43013">
    <property type="entry name" value="GLUTAMYL-TRNA REDUCTASE"/>
    <property type="match status" value="1"/>
</dbReference>
<dbReference type="PANTHER" id="PTHR43013:SF1">
    <property type="entry name" value="GLUTAMYL-TRNA REDUCTASE"/>
    <property type="match status" value="1"/>
</dbReference>
<dbReference type="Pfam" id="PF00745">
    <property type="entry name" value="GlutR_dimer"/>
    <property type="match status" value="1"/>
</dbReference>
<dbReference type="Pfam" id="PF05201">
    <property type="entry name" value="GlutR_N"/>
    <property type="match status" value="1"/>
</dbReference>
<dbReference type="Pfam" id="PF01488">
    <property type="entry name" value="Shikimate_DH"/>
    <property type="match status" value="1"/>
</dbReference>
<dbReference type="PIRSF" id="PIRSF000445">
    <property type="entry name" value="4pyrrol_synth_GluRdtase"/>
    <property type="match status" value="1"/>
</dbReference>
<dbReference type="SUPFAM" id="SSF69742">
    <property type="entry name" value="Glutamyl tRNA-reductase catalytic, N-terminal domain"/>
    <property type="match status" value="1"/>
</dbReference>
<dbReference type="SUPFAM" id="SSF69075">
    <property type="entry name" value="Glutamyl tRNA-reductase dimerization domain"/>
    <property type="match status" value="1"/>
</dbReference>
<dbReference type="SUPFAM" id="SSF51735">
    <property type="entry name" value="NAD(P)-binding Rossmann-fold domains"/>
    <property type="match status" value="1"/>
</dbReference>
<organism>
    <name type="scientific">Sulfurihydrogenibium sp. (strain YO3AOP1)</name>
    <dbReference type="NCBI Taxonomy" id="436114"/>
    <lineage>
        <taxon>Bacteria</taxon>
        <taxon>Pseudomonadati</taxon>
        <taxon>Aquificota</taxon>
        <taxon>Aquificia</taxon>
        <taxon>Aquificales</taxon>
        <taxon>Hydrogenothermaceae</taxon>
        <taxon>Sulfurihydrogenibium</taxon>
    </lineage>
</organism>
<protein>
    <recommendedName>
        <fullName evidence="1">Glutamyl-tRNA reductase</fullName>
        <shortName evidence="1">GluTR</shortName>
        <ecNumber evidence="1">1.2.1.70</ecNumber>
    </recommendedName>
</protein>
<evidence type="ECO:0000255" key="1">
    <source>
        <dbReference type="HAMAP-Rule" id="MF_00087"/>
    </source>
</evidence>
<feature type="chain" id="PRO_1000093173" description="Glutamyl-tRNA reductase">
    <location>
        <begin position="1"/>
        <end position="441"/>
    </location>
</feature>
<feature type="active site" description="Nucleophile" evidence="1">
    <location>
        <position position="50"/>
    </location>
</feature>
<feature type="binding site" evidence="1">
    <location>
        <begin position="49"/>
        <end position="52"/>
    </location>
    <ligand>
        <name>substrate</name>
    </ligand>
</feature>
<feature type="binding site" evidence="1">
    <location>
        <position position="110"/>
    </location>
    <ligand>
        <name>substrate</name>
    </ligand>
</feature>
<feature type="binding site" evidence="1">
    <location>
        <begin position="115"/>
        <end position="117"/>
    </location>
    <ligand>
        <name>substrate</name>
    </ligand>
</feature>
<feature type="binding site" evidence="1">
    <location>
        <position position="121"/>
    </location>
    <ligand>
        <name>substrate</name>
    </ligand>
</feature>
<feature type="binding site" evidence="1">
    <location>
        <begin position="190"/>
        <end position="195"/>
    </location>
    <ligand>
        <name>NADP(+)</name>
        <dbReference type="ChEBI" id="CHEBI:58349"/>
    </ligand>
</feature>
<feature type="site" description="Important for activity" evidence="1">
    <location>
        <position position="100"/>
    </location>
</feature>